<comment type="function">
    <text evidence="1 2">Minor apolipoprotein mainly associated with HDL and to a lesser extent with VLDL (By similarity). May also be associated with chylomicrons (By similarity). Important determinant of plasma triglyceride (TG) levels by both being a potent stimulator of apo-CII lipoprotein lipase (LPL) TG hydrolysis and an inhibitor of the hepatic VLDL-TG production rate (without affecting the VLDL-apoB production rate) (By similarity). Activates poorly lecithin:cholesterol acyltransferase (LCAT) and does not enhance efflux of cholesterol from macrophages (By similarity). Binds heparin (By similarity).</text>
</comment>
<comment type="subunit">
    <text evidence="1">Interacts with GPIHBP1 (By similarity). Interacts with SORL1; this interaction leads to APOA5 internalization and sorting either to lysosomes and degradation, or to the trans-Golgi network (By similarity).</text>
</comment>
<comment type="subcellular location">
    <subcellularLocation>
        <location evidence="1">Secreted</location>
    </subcellularLocation>
    <subcellularLocation>
        <location evidence="1">Early endosome</location>
    </subcellularLocation>
    <subcellularLocation>
        <location evidence="1">Late endosome</location>
    </subcellularLocation>
    <subcellularLocation>
        <location evidence="1">Golgi apparatus</location>
        <location evidence="1">trans-Golgi network</location>
    </subcellularLocation>
    <text evidence="1">In the presence of SORL1, internalized to early endosomes, sorted in a retrograde fashion to late endosomes, from which a portion is sent to lysosomes and degradation, another portion is sorted to the trans-Golgi network.</text>
</comment>
<comment type="tissue specificity">
    <text evidence="5">Liver.</text>
</comment>
<comment type="induction">
    <text evidence="5">Induced in early phase of liver regeneration. Expression is maximally increased 6 hours after partial hepatectomy, both at the liver RNA level and at the plasma protein level.</text>
</comment>
<comment type="PTM">
    <text evidence="1">Phosphorylated by FAM20C in the extracellular medium.</text>
</comment>
<comment type="similarity">
    <text evidence="6">Belongs to the apolipoprotein A1/A4/E family.</text>
</comment>
<organism>
    <name type="scientific">Rattus norvegicus</name>
    <name type="common">Rat</name>
    <dbReference type="NCBI Taxonomy" id="10116"/>
    <lineage>
        <taxon>Eukaryota</taxon>
        <taxon>Metazoa</taxon>
        <taxon>Chordata</taxon>
        <taxon>Craniata</taxon>
        <taxon>Vertebrata</taxon>
        <taxon>Euteleostomi</taxon>
        <taxon>Mammalia</taxon>
        <taxon>Eutheria</taxon>
        <taxon>Euarchontoglires</taxon>
        <taxon>Glires</taxon>
        <taxon>Rodentia</taxon>
        <taxon>Myomorpha</taxon>
        <taxon>Muroidea</taxon>
        <taxon>Muridae</taxon>
        <taxon>Murinae</taxon>
        <taxon>Rattus</taxon>
    </lineage>
</organism>
<sequence length="367" mass="41427">MAAVITWALALLSVFATVQARKSFWEYFGQNSQGKGMMGQQQKLAQESLKGSLEQDLYNMNNFLEKLGPLREPGKEPPRLAQDPEGIRKQLQQELEEVSTRLEPYMAAKHQQVGWNLEGLRQQLKPYTVELMEQVGLSVQDLQEQLRMVGKGTKAQLLGGVDEAMSLLQDMQSRVLHHTDRVKELFHPYAERLVTGIGHHVQELHRSVAPHAVASPARLSRCVQTLSHKLTRKAKDLHTSIQRNLDQLRDELSTFIRVSTDGADNRDSLDPQALSDEVRQRLQAFRHDTYLQIAAFTQAIDQETEEIQHQLAPPPPSHSAFAPELGHSDSNKALSRLQSRLDDLWEDIAYGLHDQGHSQNNPEGHSG</sequence>
<gene>
    <name type="primary">Apoa5</name>
    <name type="synonym">Rap3</name>
</gene>
<name>APOA5_RAT</name>
<feature type="signal peptide" evidence="3">
    <location>
        <begin position="1"/>
        <end position="20"/>
    </location>
</feature>
<feature type="chain" id="PRO_0000001983" description="Apolipoprotein A-V">
    <location>
        <begin position="21"/>
        <end position="367"/>
    </location>
</feature>
<feature type="region of interest" description="Disordered" evidence="4">
    <location>
        <begin position="305"/>
        <end position="332"/>
    </location>
</feature>
<feature type="coiled-coil region" evidence="3">
    <location>
        <begin position="231"/>
        <end position="255"/>
    </location>
</feature>
<feature type="modified residue" description="Phosphoserine" evidence="7">
    <location>
        <position position="52"/>
    </location>
</feature>
<accession>Q9QUH3</accession>
<accession>Q5FVT8</accession>
<protein>
    <recommendedName>
        <fullName>Apolipoprotein A-V</fullName>
        <shortName>Apo-AV</shortName>
        <shortName>ApoA-V</shortName>
    </recommendedName>
    <alternativeName>
        <fullName>Apolipoprotein A5</fullName>
    </alternativeName>
    <alternativeName>
        <fullName>Regeneration-associated protein 3</fullName>
    </alternativeName>
</protein>
<reference key="1">
    <citation type="journal article" date="2001" name="J. Biol. Chem.">
        <title>Apolipoprotein A-V. A novel apolipoprotein associated with an early phase of liver regeneration.</title>
        <authorList>
            <person name="van Der Vliet H.N."/>
            <person name="Sammels M.G."/>
            <person name="Leegwater A.C.J."/>
            <person name="Levels J.H.M."/>
            <person name="Reitsma P.H."/>
            <person name="Boers W."/>
            <person name="Chamuleau R.A.F.M."/>
        </authorList>
    </citation>
    <scope>NUCLEOTIDE SEQUENCE [MRNA]</scope>
    <scope>TISSUE SPECIFICITY</scope>
    <scope>INDUCTION</scope>
    <source>
        <strain>Wistar</strain>
        <tissue>Liver</tissue>
    </source>
</reference>
<reference key="2">
    <citation type="journal article" date="2004" name="Genome Res.">
        <title>The status, quality, and expansion of the NIH full-length cDNA project: the Mammalian Gene Collection (MGC).</title>
        <authorList>
            <consortium name="The MGC Project Team"/>
        </authorList>
    </citation>
    <scope>NUCLEOTIDE SEQUENCE [LARGE SCALE MRNA]</scope>
    <source>
        <tissue>Liver</tissue>
    </source>
</reference>
<reference key="3">
    <citation type="journal article" date="2012" name="Nat. Commun.">
        <title>Quantitative maps of protein phosphorylation sites across 14 different rat organs and tissues.</title>
        <authorList>
            <person name="Lundby A."/>
            <person name="Secher A."/>
            <person name="Lage K."/>
            <person name="Nordsborg N.B."/>
            <person name="Dmytriyev A."/>
            <person name="Lundby C."/>
            <person name="Olsen J.V."/>
        </authorList>
    </citation>
    <scope>PHOSPHORYLATION [LARGE SCALE ANALYSIS] AT SER-52</scope>
    <scope>IDENTIFICATION BY MASS SPECTROMETRY [LARGE SCALE ANALYSIS]</scope>
</reference>
<proteinExistence type="evidence at protein level"/>
<evidence type="ECO:0000250" key="1">
    <source>
        <dbReference type="UniProtKB" id="Q6Q788"/>
    </source>
</evidence>
<evidence type="ECO:0000250" key="2">
    <source>
        <dbReference type="UniProtKB" id="Q8C7G5"/>
    </source>
</evidence>
<evidence type="ECO:0000255" key="3"/>
<evidence type="ECO:0000256" key="4">
    <source>
        <dbReference type="SAM" id="MobiDB-lite"/>
    </source>
</evidence>
<evidence type="ECO:0000269" key="5">
    <source>
    </source>
</evidence>
<evidence type="ECO:0000305" key="6"/>
<evidence type="ECO:0007744" key="7">
    <source>
    </source>
</evidence>
<keyword id="KW-0162">Chylomicron</keyword>
<keyword id="KW-0175">Coiled coil</keyword>
<keyword id="KW-0967">Endosome</keyword>
<keyword id="KW-0333">Golgi apparatus</keyword>
<keyword id="KW-0345">HDL</keyword>
<keyword id="KW-0445">Lipid transport</keyword>
<keyword id="KW-0597">Phosphoprotein</keyword>
<keyword id="KW-1185">Reference proteome</keyword>
<keyword id="KW-0964">Secreted</keyword>
<keyword id="KW-0732">Signal</keyword>
<keyword id="KW-0813">Transport</keyword>
<keyword id="KW-0850">VLDL</keyword>
<dbReference type="EMBL" id="AF202887">
    <property type="protein sequence ID" value="AAF25659.1"/>
    <property type="molecule type" value="mRNA"/>
</dbReference>
<dbReference type="EMBL" id="AF202888">
    <property type="protein sequence ID" value="AAF25660.1"/>
    <property type="molecule type" value="mRNA"/>
</dbReference>
<dbReference type="EMBL" id="BC089780">
    <property type="protein sequence ID" value="AAH89780.1"/>
    <property type="molecule type" value="mRNA"/>
</dbReference>
<dbReference type="RefSeq" id="NP_001264193.1">
    <property type="nucleotide sequence ID" value="NM_001277264.1"/>
</dbReference>
<dbReference type="RefSeq" id="NP_542143.1">
    <property type="nucleotide sequence ID" value="NM_080576.2"/>
</dbReference>
<dbReference type="SMR" id="Q9QUH3"/>
<dbReference type="FunCoup" id="Q9QUH3">
    <property type="interactions" value="90"/>
</dbReference>
<dbReference type="IntAct" id="Q9QUH3">
    <property type="interactions" value="1"/>
</dbReference>
<dbReference type="STRING" id="10116.ENSRNOP00000024918"/>
<dbReference type="iPTMnet" id="Q9QUH3"/>
<dbReference type="PhosphoSitePlus" id="Q9QUH3"/>
<dbReference type="PaxDb" id="10116-ENSRNOP00000024918"/>
<dbReference type="GeneID" id="140638"/>
<dbReference type="KEGG" id="rno:140638"/>
<dbReference type="UCSC" id="RGD:70903">
    <property type="organism name" value="rat"/>
</dbReference>
<dbReference type="AGR" id="RGD:70903"/>
<dbReference type="CTD" id="116519"/>
<dbReference type="RGD" id="70903">
    <property type="gene designation" value="Apoa5"/>
</dbReference>
<dbReference type="eggNOG" id="ENOG502S33P">
    <property type="taxonomic scope" value="Eukaryota"/>
</dbReference>
<dbReference type="HOGENOM" id="CLU_747959_0_0_1"/>
<dbReference type="InParanoid" id="Q9QUH3"/>
<dbReference type="OrthoDB" id="33044at9989"/>
<dbReference type="PhylomeDB" id="Q9QUH3"/>
<dbReference type="TreeFam" id="TF334458"/>
<dbReference type="Reactome" id="R-RNO-381426">
    <property type="pathway name" value="Regulation of Insulin-like Growth Factor (IGF) transport and uptake by Insulin-like Growth Factor Binding Proteins (IGFBPs)"/>
</dbReference>
<dbReference type="Reactome" id="R-RNO-8957275">
    <property type="pathway name" value="Post-translational protein phosphorylation"/>
</dbReference>
<dbReference type="Reactome" id="R-RNO-8963901">
    <property type="pathway name" value="Chylomicron remodeling"/>
</dbReference>
<dbReference type="PRO" id="PR:Q9QUH3"/>
<dbReference type="Proteomes" id="UP000002494">
    <property type="component" value="Unplaced"/>
</dbReference>
<dbReference type="GO" id="GO:0042627">
    <property type="term" value="C:chylomicron"/>
    <property type="evidence" value="ECO:0000266"/>
    <property type="project" value="RGD"/>
</dbReference>
<dbReference type="GO" id="GO:0005769">
    <property type="term" value="C:early endosome"/>
    <property type="evidence" value="ECO:0007669"/>
    <property type="project" value="UniProtKB-SubCell"/>
</dbReference>
<dbReference type="GO" id="GO:0005576">
    <property type="term" value="C:extracellular region"/>
    <property type="evidence" value="ECO:0000266"/>
    <property type="project" value="RGD"/>
</dbReference>
<dbReference type="GO" id="GO:0005615">
    <property type="term" value="C:extracellular space"/>
    <property type="evidence" value="ECO:0000314"/>
    <property type="project" value="RGD"/>
</dbReference>
<dbReference type="GO" id="GO:1903561">
    <property type="term" value="C:extracellular vesicle"/>
    <property type="evidence" value="ECO:0000318"/>
    <property type="project" value="GO_Central"/>
</dbReference>
<dbReference type="GO" id="GO:0005794">
    <property type="term" value="C:Golgi apparatus"/>
    <property type="evidence" value="ECO:0007669"/>
    <property type="project" value="UniProtKB-SubCell"/>
</dbReference>
<dbReference type="GO" id="GO:0034364">
    <property type="term" value="C:high-density lipoprotein particle"/>
    <property type="evidence" value="ECO:0000266"/>
    <property type="project" value="RGD"/>
</dbReference>
<dbReference type="GO" id="GO:0005770">
    <property type="term" value="C:late endosome"/>
    <property type="evidence" value="ECO:0007669"/>
    <property type="project" value="UniProtKB-SubCell"/>
</dbReference>
<dbReference type="GO" id="GO:0034361">
    <property type="term" value="C:very-low-density lipoprotein particle"/>
    <property type="evidence" value="ECO:0000266"/>
    <property type="project" value="RGD"/>
</dbReference>
<dbReference type="GO" id="GO:0120020">
    <property type="term" value="F:cholesterol transfer activity"/>
    <property type="evidence" value="ECO:0000318"/>
    <property type="project" value="GO_Central"/>
</dbReference>
<dbReference type="GO" id="GO:0008047">
    <property type="term" value="F:enzyme activator activity"/>
    <property type="evidence" value="ECO:0000266"/>
    <property type="project" value="RGD"/>
</dbReference>
<dbReference type="GO" id="GO:0019899">
    <property type="term" value="F:enzyme binding"/>
    <property type="evidence" value="ECO:0000266"/>
    <property type="project" value="RGD"/>
</dbReference>
<dbReference type="GO" id="GO:0008201">
    <property type="term" value="F:heparin binding"/>
    <property type="evidence" value="ECO:0000266"/>
    <property type="project" value="RGD"/>
</dbReference>
<dbReference type="GO" id="GO:0060229">
    <property type="term" value="F:lipase activator activity"/>
    <property type="evidence" value="ECO:0000266"/>
    <property type="project" value="RGD"/>
</dbReference>
<dbReference type="GO" id="GO:0035473">
    <property type="term" value="F:lipase binding"/>
    <property type="evidence" value="ECO:0000266"/>
    <property type="project" value="RGD"/>
</dbReference>
<dbReference type="GO" id="GO:0008289">
    <property type="term" value="F:lipid binding"/>
    <property type="evidence" value="ECO:0000266"/>
    <property type="project" value="RGD"/>
</dbReference>
<dbReference type="GO" id="GO:0060230">
    <property type="term" value="F:lipoprotein lipase activator activity"/>
    <property type="evidence" value="ECO:0000266"/>
    <property type="project" value="RGD"/>
</dbReference>
<dbReference type="GO" id="GO:0070325">
    <property type="term" value="F:lipoprotein particle receptor binding"/>
    <property type="evidence" value="ECO:0000266"/>
    <property type="project" value="RGD"/>
</dbReference>
<dbReference type="GO" id="GO:0050750">
    <property type="term" value="F:low-density lipoprotein particle receptor binding"/>
    <property type="evidence" value="ECO:0000266"/>
    <property type="project" value="RGD"/>
</dbReference>
<dbReference type="GO" id="GO:0031210">
    <property type="term" value="F:phosphatidylcholine binding"/>
    <property type="evidence" value="ECO:0000266"/>
    <property type="project" value="RGD"/>
</dbReference>
<dbReference type="GO" id="GO:0060228">
    <property type="term" value="F:phosphatidylcholine-sterol O-acyltransferase activator activity"/>
    <property type="evidence" value="ECO:0000318"/>
    <property type="project" value="GO_Central"/>
</dbReference>
<dbReference type="GO" id="GO:0005543">
    <property type="term" value="F:phospholipid binding"/>
    <property type="evidence" value="ECO:0000266"/>
    <property type="project" value="RGD"/>
</dbReference>
<dbReference type="GO" id="GO:0055090">
    <property type="term" value="P:acylglycerol homeostasis"/>
    <property type="evidence" value="ECO:0000266"/>
    <property type="project" value="RGD"/>
</dbReference>
<dbReference type="GO" id="GO:0031100">
    <property type="term" value="P:animal organ regeneration"/>
    <property type="evidence" value="ECO:0000270"/>
    <property type="project" value="RGD"/>
</dbReference>
<dbReference type="GO" id="GO:0033344">
    <property type="term" value="P:cholesterol efflux"/>
    <property type="evidence" value="ECO:0000318"/>
    <property type="project" value="GO_Central"/>
</dbReference>
<dbReference type="GO" id="GO:0042632">
    <property type="term" value="P:cholesterol homeostasis"/>
    <property type="evidence" value="ECO:0000266"/>
    <property type="project" value="RGD"/>
</dbReference>
<dbReference type="GO" id="GO:0008203">
    <property type="term" value="P:cholesterol metabolic process"/>
    <property type="evidence" value="ECO:0000318"/>
    <property type="project" value="GO_Central"/>
</dbReference>
<dbReference type="GO" id="GO:0006869">
    <property type="term" value="P:lipid transport"/>
    <property type="evidence" value="ECO:0000315"/>
    <property type="project" value="RGD"/>
</dbReference>
<dbReference type="GO" id="GO:0042157">
    <property type="term" value="P:lipoprotein metabolic process"/>
    <property type="evidence" value="ECO:0007669"/>
    <property type="project" value="InterPro"/>
</dbReference>
<dbReference type="GO" id="GO:0033700">
    <property type="term" value="P:phospholipid efflux"/>
    <property type="evidence" value="ECO:0000318"/>
    <property type="project" value="GO_Central"/>
</dbReference>
<dbReference type="GO" id="GO:0045723">
    <property type="term" value="P:positive regulation of fatty acid biosynthetic process"/>
    <property type="evidence" value="ECO:0000266"/>
    <property type="project" value="RGD"/>
</dbReference>
<dbReference type="GO" id="GO:0050996">
    <property type="term" value="P:positive regulation of lipid catabolic process"/>
    <property type="evidence" value="ECO:0000266"/>
    <property type="project" value="RGD"/>
</dbReference>
<dbReference type="GO" id="GO:0010898">
    <property type="term" value="P:positive regulation of triglyceride catabolic process"/>
    <property type="evidence" value="ECO:0000266"/>
    <property type="project" value="RGD"/>
</dbReference>
<dbReference type="GO" id="GO:0010902">
    <property type="term" value="P:positive regulation of very-low-density lipoprotein particle remodeling"/>
    <property type="evidence" value="ECO:0000266"/>
    <property type="project" value="RGD"/>
</dbReference>
<dbReference type="GO" id="GO:0009725">
    <property type="term" value="P:response to hormone"/>
    <property type="evidence" value="ECO:0000270"/>
    <property type="project" value="RGD"/>
</dbReference>
<dbReference type="GO" id="GO:0042246">
    <property type="term" value="P:tissue regeneration"/>
    <property type="evidence" value="ECO:0000266"/>
    <property type="project" value="RGD"/>
</dbReference>
<dbReference type="GO" id="GO:0019433">
    <property type="term" value="P:triglyceride catabolic process"/>
    <property type="evidence" value="ECO:0000266"/>
    <property type="project" value="RGD"/>
</dbReference>
<dbReference type="GO" id="GO:0070328">
    <property type="term" value="P:triglyceride homeostasis"/>
    <property type="evidence" value="ECO:0000266"/>
    <property type="project" value="RGD"/>
</dbReference>
<dbReference type="GO" id="GO:0006641">
    <property type="term" value="P:triglyceride metabolic process"/>
    <property type="evidence" value="ECO:0000266"/>
    <property type="project" value="RGD"/>
</dbReference>
<dbReference type="GO" id="GO:0034370">
    <property type="term" value="P:triglyceride-rich lipoprotein particle remodeling"/>
    <property type="evidence" value="ECO:0000266"/>
    <property type="project" value="RGD"/>
</dbReference>
<dbReference type="FunFam" id="1.20.120.20:FF:000006">
    <property type="entry name" value="Apolipoprotein A-V"/>
    <property type="match status" value="1"/>
</dbReference>
<dbReference type="Gene3D" id="1.20.120.20">
    <property type="entry name" value="Apolipoprotein"/>
    <property type="match status" value="2"/>
</dbReference>
<dbReference type="InterPro" id="IPR000074">
    <property type="entry name" value="ApoA_E"/>
</dbReference>
<dbReference type="InterPro" id="IPR050163">
    <property type="entry name" value="Apolipoprotein_A1/A4/E"/>
</dbReference>
<dbReference type="PANTHER" id="PTHR18976">
    <property type="entry name" value="APOLIPOPROTEIN"/>
    <property type="match status" value="1"/>
</dbReference>
<dbReference type="PANTHER" id="PTHR18976:SF13">
    <property type="entry name" value="APOLIPOPROTEIN A-V"/>
    <property type="match status" value="1"/>
</dbReference>
<dbReference type="Pfam" id="PF01442">
    <property type="entry name" value="Apolipoprotein"/>
    <property type="match status" value="2"/>
</dbReference>
<dbReference type="SUPFAM" id="SSF58113">
    <property type="entry name" value="Apolipoprotein A-I"/>
    <property type="match status" value="1"/>
</dbReference>